<organism>
    <name type="scientific">Salmonella enteritidis PT4 (strain P125109)</name>
    <dbReference type="NCBI Taxonomy" id="550537"/>
    <lineage>
        <taxon>Bacteria</taxon>
        <taxon>Pseudomonadati</taxon>
        <taxon>Pseudomonadota</taxon>
        <taxon>Gammaproteobacteria</taxon>
        <taxon>Enterobacterales</taxon>
        <taxon>Enterobacteriaceae</taxon>
        <taxon>Salmonella</taxon>
    </lineage>
</organism>
<keyword id="KW-0963">Cytoplasm</keyword>
<keyword id="KW-0324">Glycolysis</keyword>
<keyword id="KW-0456">Lyase</keyword>
<keyword id="KW-0460">Magnesium</keyword>
<keyword id="KW-0479">Metal-binding</keyword>
<keyword id="KW-0964">Secreted</keyword>
<dbReference type="EC" id="4.2.1.11" evidence="1"/>
<dbReference type="EMBL" id="AM933172">
    <property type="protein sequence ID" value="CAR34370.1"/>
    <property type="molecule type" value="Genomic_DNA"/>
</dbReference>
<dbReference type="RefSeq" id="WP_000036734.1">
    <property type="nucleotide sequence ID" value="NC_011294.1"/>
</dbReference>
<dbReference type="SMR" id="B5QW40"/>
<dbReference type="GeneID" id="66757270"/>
<dbReference type="KEGG" id="set:SEN2791"/>
<dbReference type="HOGENOM" id="CLU_031223_2_1_6"/>
<dbReference type="UniPathway" id="UPA00109">
    <property type="reaction ID" value="UER00187"/>
</dbReference>
<dbReference type="Proteomes" id="UP000000613">
    <property type="component" value="Chromosome"/>
</dbReference>
<dbReference type="GO" id="GO:0009986">
    <property type="term" value="C:cell surface"/>
    <property type="evidence" value="ECO:0007669"/>
    <property type="project" value="UniProtKB-SubCell"/>
</dbReference>
<dbReference type="GO" id="GO:0005576">
    <property type="term" value="C:extracellular region"/>
    <property type="evidence" value="ECO:0007669"/>
    <property type="project" value="UniProtKB-SubCell"/>
</dbReference>
<dbReference type="GO" id="GO:0000015">
    <property type="term" value="C:phosphopyruvate hydratase complex"/>
    <property type="evidence" value="ECO:0007669"/>
    <property type="project" value="InterPro"/>
</dbReference>
<dbReference type="GO" id="GO:0000287">
    <property type="term" value="F:magnesium ion binding"/>
    <property type="evidence" value="ECO:0007669"/>
    <property type="project" value="UniProtKB-UniRule"/>
</dbReference>
<dbReference type="GO" id="GO:0004634">
    <property type="term" value="F:phosphopyruvate hydratase activity"/>
    <property type="evidence" value="ECO:0007669"/>
    <property type="project" value="UniProtKB-UniRule"/>
</dbReference>
<dbReference type="GO" id="GO:0006096">
    <property type="term" value="P:glycolytic process"/>
    <property type="evidence" value="ECO:0007669"/>
    <property type="project" value="UniProtKB-UniRule"/>
</dbReference>
<dbReference type="CDD" id="cd03313">
    <property type="entry name" value="enolase"/>
    <property type="match status" value="1"/>
</dbReference>
<dbReference type="FunFam" id="3.20.20.120:FF:000001">
    <property type="entry name" value="Enolase"/>
    <property type="match status" value="1"/>
</dbReference>
<dbReference type="FunFam" id="3.30.390.10:FF:000001">
    <property type="entry name" value="Enolase"/>
    <property type="match status" value="1"/>
</dbReference>
<dbReference type="Gene3D" id="3.20.20.120">
    <property type="entry name" value="Enolase-like C-terminal domain"/>
    <property type="match status" value="1"/>
</dbReference>
<dbReference type="Gene3D" id="3.30.390.10">
    <property type="entry name" value="Enolase-like, N-terminal domain"/>
    <property type="match status" value="1"/>
</dbReference>
<dbReference type="HAMAP" id="MF_00318">
    <property type="entry name" value="Enolase"/>
    <property type="match status" value="1"/>
</dbReference>
<dbReference type="InterPro" id="IPR000941">
    <property type="entry name" value="Enolase"/>
</dbReference>
<dbReference type="InterPro" id="IPR036849">
    <property type="entry name" value="Enolase-like_C_sf"/>
</dbReference>
<dbReference type="InterPro" id="IPR029017">
    <property type="entry name" value="Enolase-like_N"/>
</dbReference>
<dbReference type="InterPro" id="IPR020810">
    <property type="entry name" value="Enolase_C"/>
</dbReference>
<dbReference type="InterPro" id="IPR020809">
    <property type="entry name" value="Enolase_CS"/>
</dbReference>
<dbReference type="InterPro" id="IPR020811">
    <property type="entry name" value="Enolase_N"/>
</dbReference>
<dbReference type="NCBIfam" id="TIGR01060">
    <property type="entry name" value="eno"/>
    <property type="match status" value="1"/>
</dbReference>
<dbReference type="PANTHER" id="PTHR11902">
    <property type="entry name" value="ENOLASE"/>
    <property type="match status" value="1"/>
</dbReference>
<dbReference type="PANTHER" id="PTHR11902:SF1">
    <property type="entry name" value="ENOLASE"/>
    <property type="match status" value="1"/>
</dbReference>
<dbReference type="Pfam" id="PF00113">
    <property type="entry name" value="Enolase_C"/>
    <property type="match status" value="1"/>
</dbReference>
<dbReference type="Pfam" id="PF03952">
    <property type="entry name" value="Enolase_N"/>
    <property type="match status" value="1"/>
</dbReference>
<dbReference type="PIRSF" id="PIRSF001400">
    <property type="entry name" value="Enolase"/>
    <property type="match status" value="1"/>
</dbReference>
<dbReference type="PRINTS" id="PR00148">
    <property type="entry name" value="ENOLASE"/>
</dbReference>
<dbReference type="SFLD" id="SFLDF00002">
    <property type="entry name" value="enolase"/>
    <property type="match status" value="1"/>
</dbReference>
<dbReference type="SFLD" id="SFLDG00178">
    <property type="entry name" value="enolase"/>
    <property type="match status" value="1"/>
</dbReference>
<dbReference type="SMART" id="SM01192">
    <property type="entry name" value="Enolase_C"/>
    <property type="match status" value="1"/>
</dbReference>
<dbReference type="SMART" id="SM01193">
    <property type="entry name" value="Enolase_N"/>
    <property type="match status" value="1"/>
</dbReference>
<dbReference type="SUPFAM" id="SSF51604">
    <property type="entry name" value="Enolase C-terminal domain-like"/>
    <property type="match status" value="1"/>
</dbReference>
<dbReference type="SUPFAM" id="SSF54826">
    <property type="entry name" value="Enolase N-terminal domain-like"/>
    <property type="match status" value="1"/>
</dbReference>
<dbReference type="PROSITE" id="PS00164">
    <property type="entry name" value="ENOLASE"/>
    <property type="match status" value="1"/>
</dbReference>
<feature type="chain" id="PRO_1000115908" description="Enolase">
    <location>
        <begin position="1"/>
        <end position="432"/>
    </location>
</feature>
<feature type="active site" description="Proton donor" evidence="1">
    <location>
        <position position="209"/>
    </location>
</feature>
<feature type="active site" description="Proton acceptor" evidence="1">
    <location>
        <position position="342"/>
    </location>
</feature>
<feature type="binding site" evidence="1">
    <location>
        <position position="167"/>
    </location>
    <ligand>
        <name>(2R)-2-phosphoglycerate</name>
        <dbReference type="ChEBI" id="CHEBI:58289"/>
    </ligand>
</feature>
<feature type="binding site" evidence="1">
    <location>
        <position position="246"/>
    </location>
    <ligand>
        <name>Mg(2+)</name>
        <dbReference type="ChEBI" id="CHEBI:18420"/>
    </ligand>
</feature>
<feature type="binding site" evidence="1">
    <location>
        <position position="290"/>
    </location>
    <ligand>
        <name>Mg(2+)</name>
        <dbReference type="ChEBI" id="CHEBI:18420"/>
    </ligand>
</feature>
<feature type="binding site" evidence="1">
    <location>
        <position position="317"/>
    </location>
    <ligand>
        <name>Mg(2+)</name>
        <dbReference type="ChEBI" id="CHEBI:18420"/>
    </ligand>
</feature>
<feature type="binding site" evidence="1">
    <location>
        <position position="342"/>
    </location>
    <ligand>
        <name>(2R)-2-phosphoglycerate</name>
        <dbReference type="ChEBI" id="CHEBI:58289"/>
    </ligand>
</feature>
<feature type="binding site" evidence="1">
    <location>
        <position position="371"/>
    </location>
    <ligand>
        <name>(2R)-2-phosphoglycerate</name>
        <dbReference type="ChEBI" id="CHEBI:58289"/>
    </ligand>
</feature>
<feature type="binding site" evidence="1">
    <location>
        <position position="372"/>
    </location>
    <ligand>
        <name>(2R)-2-phosphoglycerate</name>
        <dbReference type="ChEBI" id="CHEBI:58289"/>
    </ligand>
</feature>
<feature type="binding site" evidence="1">
    <location>
        <position position="393"/>
    </location>
    <ligand>
        <name>(2R)-2-phosphoglycerate</name>
        <dbReference type="ChEBI" id="CHEBI:58289"/>
    </ligand>
</feature>
<gene>
    <name evidence="1" type="primary">eno</name>
    <name type="ordered locus">SEN2791</name>
</gene>
<name>ENO_SALEP</name>
<proteinExistence type="inferred from homology"/>
<protein>
    <recommendedName>
        <fullName evidence="1">Enolase</fullName>
        <ecNumber evidence="1">4.2.1.11</ecNumber>
    </recommendedName>
    <alternativeName>
        <fullName evidence="1">2-phospho-D-glycerate hydro-lyase</fullName>
    </alternativeName>
    <alternativeName>
        <fullName evidence="1">2-phosphoglycerate dehydratase</fullName>
    </alternativeName>
</protein>
<accession>B5QW40</accession>
<sequence length="432" mass="45599">MSKIVKVIGREIIDSRGNPTVEAEVHLEGGFVGMAAAPSGASTGSREALELRDGDKSRFLGKGVTKAVGAVNGPIAQAILGKDAKDQAGIDKIMIDLDGTENKSNFGANAILAVSLANAKAAAAAKGMPLYEHIAELNGTPGKYSMPVPMMNIINGGEHADNNVDIQEFMIQPVGAKTVKEAIRMGSEVFHHLAKVLKGKGMNTAVGDEGGYAPNLGSNAEALAVIAEAVKAAGYELGKDITLAMDCAASEFYKDGKYVLAGEGNKAFTSEEFTHFLEELTKQYPIVSIEDGLDESDWDGFAYQTKVLGDKIQLVGDDLFVTNTKILKEGIEKGIANSILIKFNQIGSLTETLAAIKMAKDAGYTAVISHRSGETEDATIADLAVGTAAGQIKTGSMSRSDRVAKYNQLIRIEEALGEKAPYNGRKEIKGQA</sequence>
<evidence type="ECO:0000255" key="1">
    <source>
        <dbReference type="HAMAP-Rule" id="MF_00318"/>
    </source>
</evidence>
<reference key="1">
    <citation type="journal article" date="2008" name="Genome Res.">
        <title>Comparative genome analysis of Salmonella enteritidis PT4 and Salmonella gallinarum 287/91 provides insights into evolutionary and host adaptation pathways.</title>
        <authorList>
            <person name="Thomson N.R."/>
            <person name="Clayton D.J."/>
            <person name="Windhorst D."/>
            <person name="Vernikos G."/>
            <person name="Davidson S."/>
            <person name="Churcher C."/>
            <person name="Quail M.A."/>
            <person name="Stevens M."/>
            <person name="Jones M.A."/>
            <person name="Watson M."/>
            <person name="Barron A."/>
            <person name="Layton A."/>
            <person name="Pickard D."/>
            <person name="Kingsley R.A."/>
            <person name="Bignell A."/>
            <person name="Clark L."/>
            <person name="Harris B."/>
            <person name="Ormond D."/>
            <person name="Abdellah Z."/>
            <person name="Brooks K."/>
            <person name="Cherevach I."/>
            <person name="Chillingworth T."/>
            <person name="Woodward J."/>
            <person name="Norberczak H."/>
            <person name="Lord A."/>
            <person name="Arrowsmith C."/>
            <person name="Jagels K."/>
            <person name="Moule S."/>
            <person name="Mungall K."/>
            <person name="Saunders M."/>
            <person name="Whitehead S."/>
            <person name="Chabalgoity J.A."/>
            <person name="Maskell D."/>
            <person name="Humphreys T."/>
            <person name="Roberts M."/>
            <person name="Barrow P.A."/>
            <person name="Dougan G."/>
            <person name="Parkhill J."/>
        </authorList>
    </citation>
    <scope>NUCLEOTIDE SEQUENCE [LARGE SCALE GENOMIC DNA]</scope>
    <source>
        <strain>P125109</strain>
    </source>
</reference>
<comment type="function">
    <text evidence="1">Catalyzes the reversible conversion of 2-phosphoglycerate (2-PG) into phosphoenolpyruvate (PEP). It is essential for the degradation of carbohydrates via glycolysis.</text>
</comment>
<comment type="catalytic activity">
    <reaction evidence="1">
        <text>(2R)-2-phosphoglycerate = phosphoenolpyruvate + H2O</text>
        <dbReference type="Rhea" id="RHEA:10164"/>
        <dbReference type="ChEBI" id="CHEBI:15377"/>
        <dbReference type="ChEBI" id="CHEBI:58289"/>
        <dbReference type="ChEBI" id="CHEBI:58702"/>
        <dbReference type="EC" id="4.2.1.11"/>
    </reaction>
</comment>
<comment type="cofactor">
    <cofactor evidence="1">
        <name>Mg(2+)</name>
        <dbReference type="ChEBI" id="CHEBI:18420"/>
    </cofactor>
    <text evidence="1">Binds a second Mg(2+) ion via substrate during catalysis.</text>
</comment>
<comment type="pathway">
    <text evidence="1">Carbohydrate degradation; glycolysis; pyruvate from D-glyceraldehyde 3-phosphate: step 4/5.</text>
</comment>
<comment type="subunit">
    <text evidence="1">Component of the RNA degradosome, a multiprotein complex involved in RNA processing and mRNA degradation.</text>
</comment>
<comment type="subcellular location">
    <subcellularLocation>
        <location evidence="1">Cytoplasm</location>
    </subcellularLocation>
    <subcellularLocation>
        <location evidence="1">Secreted</location>
    </subcellularLocation>
    <subcellularLocation>
        <location evidence="1">Cell surface</location>
    </subcellularLocation>
    <text evidence="1">Fractions of enolase are present in both the cytoplasm and on the cell surface.</text>
</comment>
<comment type="similarity">
    <text evidence="1">Belongs to the enolase family.</text>
</comment>